<comment type="function">
    <text evidence="1">Catalyzes the conversion of N-formimidoyl-L-glutamate to L-glutamate and formamide.</text>
</comment>
<comment type="catalytic activity">
    <reaction evidence="1">
        <text>N-formimidoyl-L-glutamate + H2O = formamide + L-glutamate</text>
        <dbReference type="Rhea" id="RHEA:22492"/>
        <dbReference type="ChEBI" id="CHEBI:15377"/>
        <dbReference type="ChEBI" id="CHEBI:16397"/>
        <dbReference type="ChEBI" id="CHEBI:29985"/>
        <dbReference type="ChEBI" id="CHEBI:58928"/>
        <dbReference type="EC" id="3.5.3.8"/>
    </reaction>
</comment>
<comment type="cofactor">
    <cofactor evidence="1">
        <name>Mn(2+)</name>
        <dbReference type="ChEBI" id="CHEBI:29035"/>
    </cofactor>
    <text evidence="1">Binds 2 manganese ions per subunit.</text>
</comment>
<comment type="pathway">
    <text evidence="1">Amino-acid degradation; L-histidine degradation into L-glutamate; L-glutamate from N-formimidoyl-L-glutamate (hydrolase route): step 1/1.</text>
</comment>
<comment type="similarity">
    <text evidence="1">Belongs to the arginase family.</text>
</comment>
<accession>P0CZ67</accession>
<accession>Q8K5L4</accession>
<gene>
    <name evidence="1" type="primary">hutG</name>
    <name type="ordered locus">SPs1777</name>
</gene>
<proteinExistence type="inferred from homology"/>
<name>HUTG_STRPQ</name>
<evidence type="ECO:0000255" key="1">
    <source>
        <dbReference type="HAMAP-Rule" id="MF_00737"/>
    </source>
</evidence>
<dbReference type="EC" id="3.5.3.8" evidence="1"/>
<dbReference type="EMBL" id="BA000034">
    <property type="protein sequence ID" value="BAC64872.1"/>
    <property type="molecule type" value="Genomic_DNA"/>
</dbReference>
<dbReference type="RefSeq" id="WP_002982269.1">
    <property type="nucleotide sequence ID" value="NC_004606.1"/>
</dbReference>
<dbReference type="SMR" id="P0CZ67"/>
<dbReference type="KEGG" id="sps:SPs1777"/>
<dbReference type="HOGENOM" id="CLU_039478_2_0_9"/>
<dbReference type="UniPathway" id="UPA00379">
    <property type="reaction ID" value="UER00552"/>
</dbReference>
<dbReference type="GO" id="GO:0008783">
    <property type="term" value="F:agmatinase activity"/>
    <property type="evidence" value="ECO:0007669"/>
    <property type="project" value="TreeGrafter"/>
</dbReference>
<dbReference type="GO" id="GO:0050415">
    <property type="term" value="F:formimidoylglutamase activity"/>
    <property type="evidence" value="ECO:0007669"/>
    <property type="project" value="UniProtKB-UniRule"/>
</dbReference>
<dbReference type="GO" id="GO:0030145">
    <property type="term" value="F:manganese ion binding"/>
    <property type="evidence" value="ECO:0007669"/>
    <property type="project" value="UniProtKB-UniRule"/>
</dbReference>
<dbReference type="GO" id="GO:0019556">
    <property type="term" value="P:L-histidine catabolic process to glutamate and formamide"/>
    <property type="evidence" value="ECO:0007669"/>
    <property type="project" value="UniProtKB-UniPathway"/>
</dbReference>
<dbReference type="GO" id="GO:0019557">
    <property type="term" value="P:L-histidine catabolic process to glutamate and formate"/>
    <property type="evidence" value="ECO:0007669"/>
    <property type="project" value="UniProtKB-UniPathway"/>
</dbReference>
<dbReference type="GO" id="GO:0033389">
    <property type="term" value="P:putrescine biosynthetic process from arginine, via agmatine"/>
    <property type="evidence" value="ECO:0007669"/>
    <property type="project" value="TreeGrafter"/>
</dbReference>
<dbReference type="CDD" id="cd09988">
    <property type="entry name" value="Formimidoylglutamase"/>
    <property type="match status" value="1"/>
</dbReference>
<dbReference type="Gene3D" id="3.40.800.10">
    <property type="entry name" value="Ureohydrolase domain"/>
    <property type="match status" value="1"/>
</dbReference>
<dbReference type="HAMAP" id="MF_00737">
    <property type="entry name" value="Formimidoylglutam"/>
    <property type="match status" value="1"/>
</dbReference>
<dbReference type="InterPro" id="IPR005923">
    <property type="entry name" value="HutG"/>
</dbReference>
<dbReference type="InterPro" id="IPR006035">
    <property type="entry name" value="Ureohydrolase"/>
</dbReference>
<dbReference type="InterPro" id="IPR023696">
    <property type="entry name" value="Ureohydrolase_dom_sf"/>
</dbReference>
<dbReference type="NCBIfam" id="NF010347">
    <property type="entry name" value="PRK13775.1"/>
    <property type="match status" value="1"/>
</dbReference>
<dbReference type="PANTHER" id="PTHR11358">
    <property type="entry name" value="ARGINASE/AGMATINASE"/>
    <property type="match status" value="1"/>
</dbReference>
<dbReference type="PANTHER" id="PTHR11358:SF35">
    <property type="entry name" value="FORMIMIDOYLGLUTAMASE"/>
    <property type="match status" value="1"/>
</dbReference>
<dbReference type="Pfam" id="PF00491">
    <property type="entry name" value="Arginase"/>
    <property type="match status" value="1"/>
</dbReference>
<dbReference type="PIRSF" id="PIRSF036979">
    <property type="entry name" value="Arginase"/>
    <property type="match status" value="1"/>
</dbReference>
<dbReference type="PRINTS" id="PR00116">
    <property type="entry name" value="ARGINASE"/>
</dbReference>
<dbReference type="SUPFAM" id="SSF52768">
    <property type="entry name" value="Arginase/deacetylase"/>
    <property type="match status" value="1"/>
</dbReference>
<dbReference type="PROSITE" id="PS51409">
    <property type="entry name" value="ARGINASE_2"/>
    <property type="match status" value="1"/>
</dbReference>
<feature type="chain" id="PRO_0000411271" description="Formimidoylglutamase">
    <location>
        <begin position="1"/>
        <end position="328"/>
    </location>
</feature>
<feature type="binding site" evidence="1">
    <location>
        <position position="133"/>
    </location>
    <ligand>
        <name>Mn(2+)</name>
        <dbReference type="ChEBI" id="CHEBI:29035"/>
        <label>1</label>
    </ligand>
</feature>
<feature type="binding site" evidence="1">
    <location>
        <position position="159"/>
    </location>
    <ligand>
        <name>Mn(2+)</name>
        <dbReference type="ChEBI" id="CHEBI:29035"/>
        <label>1</label>
    </ligand>
</feature>
<feature type="binding site" evidence="1">
    <location>
        <position position="159"/>
    </location>
    <ligand>
        <name>Mn(2+)</name>
        <dbReference type="ChEBI" id="CHEBI:29035"/>
        <label>2</label>
    </ligand>
</feature>
<feature type="binding site" evidence="1">
    <location>
        <position position="161"/>
    </location>
    <ligand>
        <name>Mn(2+)</name>
        <dbReference type="ChEBI" id="CHEBI:29035"/>
        <label>2</label>
    </ligand>
</feature>
<feature type="binding site" evidence="1">
    <location>
        <position position="163"/>
    </location>
    <ligand>
        <name>Mn(2+)</name>
        <dbReference type="ChEBI" id="CHEBI:29035"/>
        <label>1</label>
    </ligand>
</feature>
<feature type="binding site" evidence="1">
    <location>
        <position position="253"/>
    </location>
    <ligand>
        <name>Mn(2+)</name>
        <dbReference type="ChEBI" id="CHEBI:29035"/>
        <label>1</label>
    </ligand>
</feature>
<feature type="binding site" evidence="1">
    <location>
        <position position="253"/>
    </location>
    <ligand>
        <name>Mn(2+)</name>
        <dbReference type="ChEBI" id="CHEBI:29035"/>
        <label>2</label>
    </ligand>
</feature>
<feature type="binding site" evidence="1">
    <location>
        <position position="255"/>
    </location>
    <ligand>
        <name>Mn(2+)</name>
        <dbReference type="ChEBI" id="CHEBI:29035"/>
        <label>2</label>
    </ligand>
</feature>
<sequence>MLEDYYPSTTSYYHSGIDDDLYTAKWGMVMTFLDLNDSSLTPFEGTHFALIGFKSDKGVYINNGRVGAVESPAAIRTQLAKFPWHLGNQVMVYDVGNIDGPNRSLEQLQNSLSKAIKRMCDLNLKPIVLGGGHETAYGHYLGLRQSLSSSDDLAVINMDAHFDLRPYDQTGPNSGTGFRQMFDDAVADKRLFKYFVLGIQEHNNNLFLFDFVAKSKGIQFLTGQDIYQMGHQKVCRAIDRFLEGQERVYLTIDMDCFSVGAAPGVSAIQSLGVDPNLAVLVLQHIAASGKLVGFDVVEVSPPHDIDNHTANLAATFIFYLVQIMAQHN</sequence>
<reference key="1">
    <citation type="journal article" date="2003" name="Genome Res.">
        <title>Genome sequence of an M3 strain of Streptococcus pyogenes reveals a large-scale genomic rearrangement in invasive strains and new insights into phage evolution.</title>
        <authorList>
            <person name="Nakagawa I."/>
            <person name="Kurokawa K."/>
            <person name="Yamashita A."/>
            <person name="Nakata M."/>
            <person name="Tomiyasu Y."/>
            <person name="Okahashi N."/>
            <person name="Kawabata S."/>
            <person name="Yamazaki K."/>
            <person name="Shiba T."/>
            <person name="Yasunaga T."/>
            <person name="Hayashi H."/>
            <person name="Hattori M."/>
            <person name="Hamada S."/>
        </authorList>
    </citation>
    <scope>NUCLEOTIDE SEQUENCE [LARGE SCALE GENOMIC DNA]</scope>
    <source>
        <strain>SSI-1</strain>
    </source>
</reference>
<protein>
    <recommendedName>
        <fullName evidence="1">Formimidoylglutamase</fullName>
        <ecNumber evidence="1">3.5.3.8</ecNumber>
    </recommendedName>
    <alternativeName>
        <fullName evidence="1">Formiminoglutamase</fullName>
    </alternativeName>
    <alternativeName>
        <fullName evidence="1">Formiminoglutamate hydrolase</fullName>
    </alternativeName>
</protein>
<organism>
    <name type="scientific">Streptococcus pyogenes serotype M3 (strain SSI-1)</name>
    <dbReference type="NCBI Taxonomy" id="193567"/>
    <lineage>
        <taxon>Bacteria</taxon>
        <taxon>Bacillati</taxon>
        <taxon>Bacillota</taxon>
        <taxon>Bacilli</taxon>
        <taxon>Lactobacillales</taxon>
        <taxon>Streptococcaceae</taxon>
        <taxon>Streptococcus</taxon>
    </lineage>
</organism>
<keyword id="KW-0369">Histidine metabolism</keyword>
<keyword id="KW-0378">Hydrolase</keyword>
<keyword id="KW-0464">Manganese</keyword>
<keyword id="KW-0479">Metal-binding</keyword>